<sequence length="508" mass="56551">MAGNQQLRVLHALDIARTQLYHFIAIVIAGMGFFTDAYDLFSISLVADLLGHVYYHGELPRNIHAAVTGIALCGTVPGQLVFGWLGDKMGRKRVYGITLLLMVVSSLASGLSFSKHEGMNIIAVLCFFRFWLGVSIGGDYPLSATIMSEYANKRTRGAFIAAVFAMQGFGNLAAGIIGMIVSAAFKHSSASKIDYAWRIILMFGAIPAALTYHWRMKMPETARYTALISKNAKKAAKDMSAVLNVNITPDDEVINELARQDEYGLFSFEFLHRHGLHLLGTTVCWFVLDVTFYSLNIFMKNIFTEVGLLPRLDSEYHHTLQRMITMTAVHTFISLCGALPGYFFTVAFVDRIGRVKIQLIGFTMMTVFMLCLAIPYDQWLRHKNKYGFAVMYGLTFFFANFGPNTTTFIIPAEIFPARLRSTCHGISGAVGKIGAIVGVFGFLYTEYHIRIFLFVLIGCNLVGFIFTLLLPESKGKSLEDLTGEIEEFQEEDEGSEVALSRPIHTVPL</sequence>
<comment type="function">
    <text evidence="1">High-affinity transporter for external inorganic phosphate.</text>
</comment>
<comment type="subcellular location">
    <subcellularLocation>
        <location evidence="1">Membrane</location>
        <topology evidence="1">Multi-pass membrane protein</topology>
    </subcellularLocation>
</comment>
<comment type="miscellaneous">
    <text>Although related to the sugar transporter family, it does not transport sugars.</text>
</comment>
<comment type="similarity">
    <text evidence="3">Belongs to the major facilitator superfamily. Phosphate:H(+) symporter (TC 2.A.1.9) family.</text>
</comment>
<comment type="sequence caution" evidence="3">
    <conflict type="miscellaneous discrepancy">
        <sequence resource="EMBL-CDS" id="AAN39054"/>
    </conflict>
    <text>Sequencing errors.</text>
</comment>
<evidence type="ECO:0000250" key="1"/>
<evidence type="ECO:0000255" key="2"/>
<evidence type="ECO:0000305" key="3"/>
<protein>
    <recommendedName>
        <fullName>Putative inorganic phosphate transporter 1-13</fullName>
        <shortName>OsPT13</shortName>
        <shortName>OsPht1;13</shortName>
    </recommendedName>
    <alternativeName>
        <fullName>H(+)/Pi cotransporter</fullName>
    </alternativeName>
</protein>
<dbReference type="EMBL" id="AF536973">
    <property type="protein sequence ID" value="AAN39054.1"/>
    <property type="status" value="ALT_SEQ"/>
    <property type="molecule type" value="Genomic_DNA"/>
</dbReference>
<dbReference type="EMBL" id="AL731620">
    <property type="protein sequence ID" value="CAE02524.2"/>
    <property type="molecule type" value="Genomic_DNA"/>
</dbReference>
<dbReference type="EMBL" id="AP008210">
    <property type="protein sequence ID" value="BAF14109.2"/>
    <property type="molecule type" value="Genomic_DNA"/>
</dbReference>
<dbReference type="EMBL" id="AP014960">
    <property type="protein sequence ID" value="BAS88000.1"/>
    <property type="molecule type" value="Genomic_DNA"/>
</dbReference>
<dbReference type="RefSeq" id="XP_015634468.1">
    <property type="nucleotide sequence ID" value="XM_015778982.1"/>
</dbReference>
<dbReference type="SMR" id="Q7XRH8"/>
<dbReference type="FunCoup" id="Q7XRH8">
    <property type="interactions" value="373"/>
</dbReference>
<dbReference type="STRING" id="39947.Q7XRH8"/>
<dbReference type="PaxDb" id="39947-Q7XRH8"/>
<dbReference type="EnsemblPlants" id="Os04t0186800-00">
    <property type="protein sequence ID" value="Os04t0186800-00"/>
    <property type="gene ID" value="Os04g0186800"/>
</dbReference>
<dbReference type="Gramene" id="Os04t0186800-00">
    <property type="protein sequence ID" value="Os04t0186800-00"/>
    <property type="gene ID" value="Os04g0186800"/>
</dbReference>
<dbReference type="KEGG" id="dosa:Os04g0186800"/>
<dbReference type="eggNOG" id="KOG0252">
    <property type="taxonomic scope" value="Eukaryota"/>
</dbReference>
<dbReference type="HOGENOM" id="CLU_001265_46_14_1"/>
<dbReference type="InParanoid" id="Q7XRH8"/>
<dbReference type="OMA" id="FSKHEGM"/>
<dbReference type="OrthoDB" id="433512at2759"/>
<dbReference type="Proteomes" id="UP000000763">
    <property type="component" value="Chromosome 4"/>
</dbReference>
<dbReference type="Proteomes" id="UP000059680">
    <property type="component" value="Chromosome 4"/>
</dbReference>
<dbReference type="GO" id="GO:0016020">
    <property type="term" value="C:membrane"/>
    <property type="evidence" value="ECO:0007669"/>
    <property type="project" value="UniProtKB-SubCell"/>
</dbReference>
<dbReference type="GO" id="GO:0015293">
    <property type="term" value="F:symporter activity"/>
    <property type="evidence" value="ECO:0007669"/>
    <property type="project" value="UniProtKB-KW"/>
</dbReference>
<dbReference type="GO" id="GO:0006817">
    <property type="term" value="P:phosphate ion transport"/>
    <property type="evidence" value="ECO:0007669"/>
    <property type="project" value="UniProtKB-KW"/>
</dbReference>
<dbReference type="CDD" id="cd17364">
    <property type="entry name" value="MFS_PhT"/>
    <property type="match status" value="1"/>
</dbReference>
<dbReference type="FunFam" id="1.20.1250.20:FF:000175">
    <property type="entry name" value="Inorganic phosphate transporter 1-6"/>
    <property type="match status" value="1"/>
</dbReference>
<dbReference type="Gene3D" id="1.20.1250.20">
    <property type="entry name" value="MFS general substrate transporter like domains"/>
    <property type="match status" value="2"/>
</dbReference>
<dbReference type="InterPro" id="IPR020846">
    <property type="entry name" value="MFS_dom"/>
</dbReference>
<dbReference type="InterPro" id="IPR005828">
    <property type="entry name" value="MFS_sugar_transport-like"/>
</dbReference>
<dbReference type="InterPro" id="IPR036259">
    <property type="entry name" value="MFS_trans_sf"/>
</dbReference>
<dbReference type="PANTHER" id="PTHR24064">
    <property type="entry name" value="SOLUTE CARRIER FAMILY 22 MEMBER"/>
    <property type="match status" value="1"/>
</dbReference>
<dbReference type="Pfam" id="PF00083">
    <property type="entry name" value="Sugar_tr"/>
    <property type="match status" value="1"/>
</dbReference>
<dbReference type="SUPFAM" id="SSF103473">
    <property type="entry name" value="MFS general substrate transporter"/>
    <property type="match status" value="1"/>
</dbReference>
<dbReference type="PROSITE" id="PS50850">
    <property type="entry name" value="MFS"/>
    <property type="match status" value="1"/>
</dbReference>
<keyword id="KW-0472">Membrane</keyword>
<keyword id="KW-0592">Phosphate transport</keyword>
<keyword id="KW-1185">Reference proteome</keyword>
<keyword id="KW-0769">Symport</keyword>
<keyword id="KW-0812">Transmembrane</keyword>
<keyword id="KW-1133">Transmembrane helix</keyword>
<keyword id="KW-0813">Transport</keyword>
<feature type="chain" id="PRO_0000365493" description="Putative inorganic phosphate transporter 1-13">
    <location>
        <begin position="1"/>
        <end position="508"/>
    </location>
</feature>
<feature type="topological domain" description="Cytoplasmic" evidence="2">
    <location>
        <begin position="1"/>
        <end position="22"/>
    </location>
</feature>
<feature type="transmembrane region" description="Helical" evidence="2">
    <location>
        <begin position="23"/>
        <end position="43"/>
    </location>
</feature>
<feature type="topological domain" description="Extracellular" evidence="2">
    <location>
        <begin position="44"/>
        <end position="64"/>
    </location>
</feature>
<feature type="transmembrane region" description="Helical" evidence="2">
    <location>
        <begin position="65"/>
        <end position="85"/>
    </location>
</feature>
<feature type="topological domain" description="Cytoplasmic" evidence="2">
    <location>
        <begin position="86"/>
        <end position="93"/>
    </location>
</feature>
<feature type="transmembrane region" description="Helical" evidence="2">
    <location>
        <begin position="94"/>
        <end position="114"/>
    </location>
</feature>
<feature type="topological domain" description="Extracellular" evidence="2">
    <location>
        <begin position="115"/>
        <end position="117"/>
    </location>
</feature>
<feature type="transmembrane region" description="Helical" evidence="2">
    <location>
        <begin position="118"/>
        <end position="138"/>
    </location>
</feature>
<feature type="topological domain" description="Cytoplasmic" evidence="2">
    <location>
        <begin position="139"/>
        <end position="159"/>
    </location>
</feature>
<feature type="transmembrane region" description="Helical" evidence="2">
    <location>
        <begin position="160"/>
        <end position="180"/>
    </location>
</feature>
<feature type="topological domain" description="Extracellular" evidence="2">
    <location>
        <begin position="181"/>
        <end position="192"/>
    </location>
</feature>
<feature type="transmembrane region" description="Helical" evidence="2">
    <location>
        <begin position="193"/>
        <end position="213"/>
    </location>
</feature>
<feature type="topological domain" description="Cytoplasmic" evidence="2">
    <location>
        <begin position="214"/>
        <end position="277"/>
    </location>
</feature>
<feature type="transmembrane region" description="Helical" evidence="2">
    <location>
        <begin position="278"/>
        <end position="298"/>
    </location>
</feature>
<feature type="topological domain" description="Extracellular" evidence="2">
    <location>
        <begin position="299"/>
        <end position="328"/>
    </location>
</feature>
<feature type="transmembrane region" description="Helical" evidence="2">
    <location>
        <begin position="329"/>
        <end position="349"/>
    </location>
</feature>
<feature type="topological domain" description="Cytoplasmic" evidence="2">
    <location>
        <begin position="350"/>
        <end position="354"/>
    </location>
</feature>
<feature type="transmembrane region" description="Helical" evidence="2">
    <location>
        <begin position="355"/>
        <end position="375"/>
    </location>
</feature>
<feature type="topological domain" description="Extracellular" evidence="2">
    <location>
        <begin position="376"/>
        <end position="389"/>
    </location>
</feature>
<feature type="transmembrane region" description="Helical" evidence="2">
    <location>
        <begin position="390"/>
        <end position="410"/>
    </location>
</feature>
<feature type="topological domain" description="Cytoplasmic" evidence="2">
    <location>
        <begin position="411"/>
        <end position="424"/>
    </location>
</feature>
<feature type="transmembrane region" description="Helical" evidence="2">
    <location>
        <begin position="425"/>
        <end position="445"/>
    </location>
</feature>
<feature type="topological domain" description="Extracellular" evidence="2">
    <location>
        <begin position="446"/>
        <end position="450"/>
    </location>
</feature>
<feature type="transmembrane region" description="Helical" evidence="2">
    <location>
        <begin position="451"/>
        <end position="471"/>
    </location>
</feature>
<feature type="topological domain" description="Cytoplasmic" evidence="2">
    <location>
        <begin position="472"/>
        <end position="508"/>
    </location>
</feature>
<organism>
    <name type="scientific">Oryza sativa subsp. japonica</name>
    <name type="common">Rice</name>
    <dbReference type="NCBI Taxonomy" id="39947"/>
    <lineage>
        <taxon>Eukaryota</taxon>
        <taxon>Viridiplantae</taxon>
        <taxon>Streptophyta</taxon>
        <taxon>Embryophyta</taxon>
        <taxon>Tracheophyta</taxon>
        <taxon>Spermatophyta</taxon>
        <taxon>Magnoliopsida</taxon>
        <taxon>Liliopsida</taxon>
        <taxon>Poales</taxon>
        <taxon>Poaceae</taxon>
        <taxon>BOP clade</taxon>
        <taxon>Oryzoideae</taxon>
        <taxon>Oryzeae</taxon>
        <taxon>Oryzinae</taxon>
        <taxon>Oryza</taxon>
        <taxon>Oryza sativa</taxon>
    </lineage>
</organism>
<gene>
    <name type="primary">PHT1-13</name>
    <name type="synonym">PT13</name>
    <name type="ordered locus">Os04g0186800</name>
    <name type="ordered locus">LOC_Os04g10800</name>
    <name type="ORF">OSJNBb0003A12.11</name>
</gene>
<reference key="1">
    <citation type="journal article" date="2002" name="Proc. Natl. Acad. Sci. U.S.A.">
        <title>Rice phosphate transporters include an evolutionarily divergent gene specifically activated in arbuscular mycorrhizal symbiosis.</title>
        <authorList>
            <person name="Paszkowski U."/>
            <person name="Kroken S."/>
            <person name="Roux C."/>
            <person name="Briggs S.P."/>
        </authorList>
    </citation>
    <scope>NUCLEOTIDE SEQUENCE [GENOMIC DNA]</scope>
</reference>
<reference key="2">
    <citation type="journal article" date="2002" name="Nature">
        <title>Sequence and analysis of rice chromosome 4.</title>
        <authorList>
            <person name="Feng Q."/>
            <person name="Zhang Y."/>
            <person name="Hao P."/>
            <person name="Wang S."/>
            <person name="Fu G."/>
            <person name="Huang Y."/>
            <person name="Li Y."/>
            <person name="Zhu J."/>
            <person name="Liu Y."/>
            <person name="Hu X."/>
            <person name="Jia P."/>
            <person name="Zhang Y."/>
            <person name="Zhao Q."/>
            <person name="Ying K."/>
            <person name="Yu S."/>
            <person name="Tang Y."/>
            <person name="Weng Q."/>
            <person name="Zhang L."/>
            <person name="Lu Y."/>
            <person name="Mu J."/>
            <person name="Lu Y."/>
            <person name="Zhang L.S."/>
            <person name="Yu Z."/>
            <person name="Fan D."/>
            <person name="Liu X."/>
            <person name="Lu T."/>
            <person name="Li C."/>
            <person name="Wu Y."/>
            <person name="Sun T."/>
            <person name="Lei H."/>
            <person name="Li T."/>
            <person name="Hu H."/>
            <person name="Guan J."/>
            <person name="Wu M."/>
            <person name="Zhang R."/>
            <person name="Zhou B."/>
            <person name="Chen Z."/>
            <person name="Chen L."/>
            <person name="Jin Z."/>
            <person name="Wang R."/>
            <person name="Yin H."/>
            <person name="Cai Z."/>
            <person name="Ren S."/>
            <person name="Lv G."/>
            <person name="Gu W."/>
            <person name="Zhu G."/>
            <person name="Tu Y."/>
            <person name="Jia J."/>
            <person name="Zhang Y."/>
            <person name="Chen J."/>
            <person name="Kang H."/>
            <person name="Chen X."/>
            <person name="Shao C."/>
            <person name="Sun Y."/>
            <person name="Hu Q."/>
            <person name="Zhang X."/>
            <person name="Zhang W."/>
            <person name="Wang L."/>
            <person name="Ding C."/>
            <person name="Sheng H."/>
            <person name="Gu J."/>
            <person name="Chen S."/>
            <person name="Ni L."/>
            <person name="Zhu F."/>
            <person name="Chen W."/>
            <person name="Lan L."/>
            <person name="Lai Y."/>
            <person name="Cheng Z."/>
            <person name="Gu M."/>
            <person name="Jiang J."/>
            <person name="Li J."/>
            <person name="Hong G."/>
            <person name="Xue Y."/>
            <person name="Han B."/>
        </authorList>
    </citation>
    <scope>NUCLEOTIDE SEQUENCE [LARGE SCALE GENOMIC DNA]</scope>
    <source>
        <strain>cv. Nipponbare</strain>
    </source>
</reference>
<reference key="3">
    <citation type="journal article" date="2005" name="Nature">
        <title>The map-based sequence of the rice genome.</title>
        <authorList>
            <consortium name="International rice genome sequencing project (IRGSP)"/>
        </authorList>
    </citation>
    <scope>NUCLEOTIDE SEQUENCE [LARGE SCALE GENOMIC DNA]</scope>
    <source>
        <strain>cv. Nipponbare</strain>
    </source>
</reference>
<reference key="4">
    <citation type="journal article" date="2008" name="Nucleic Acids Res.">
        <title>The rice annotation project database (RAP-DB): 2008 update.</title>
        <authorList>
            <consortium name="The rice annotation project (RAP)"/>
        </authorList>
    </citation>
    <scope>GENOME REANNOTATION</scope>
    <source>
        <strain>cv. Nipponbare</strain>
    </source>
</reference>
<reference key="5">
    <citation type="journal article" date="2013" name="Rice">
        <title>Improvement of the Oryza sativa Nipponbare reference genome using next generation sequence and optical map data.</title>
        <authorList>
            <person name="Kawahara Y."/>
            <person name="de la Bastide M."/>
            <person name="Hamilton J.P."/>
            <person name="Kanamori H."/>
            <person name="McCombie W.R."/>
            <person name="Ouyang S."/>
            <person name="Schwartz D.C."/>
            <person name="Tanaka T."/>
            <person name="Wu J."/>
            <person name="Zhou S."/>
            <person name="Childs K.L."/>
            <person name="Davidson R.M."/>
            <person name="Lin H."/>
            <person name="Quesada-Ocampo L."/>
            <person name="Vaillancourt B."/>
            <person name="Sakai H."/>
            <person name="Lee S.S."/>
            <person name="Kim J."/>
            <person name="Numa H."/>
            <person name="Itoh T."/>
            <person name="Buell C.R."/>
            <person name="Matsumoto T."/>
        </authorList>
    </citation>
    <scope>GENOME REANNOTATION</scope>
    <source>
        <strain>cv. Nipponbare</strain>
    </source>
</reference>
<name>PT113_ORYSJ</name>
<accession>Q7XRH8</accession>
<accession>A0A0P0W751</accession>
<accession>Q0JEX8</accession>
<accession>Q8H6G4</accession>
<proteinExistence type="inferred from homology"/>